<feature type="chain" id="PRO_1000001563" description="Recombination protein RecR">
    <location>
        <begin position="1"/>
        <end position="198"/>
    </location>
</feature>
<feature type="domain" description="Toprim" evidence="1">
    <location>
        <begin position="80"/>
        <end position="175"/>
    </location>
</feature>
<feature type="zinc finger region" description="C4-type" evidence="1">
    <location>
        <begin position="57"/>
        <end position="72"/>
    </location>
</feature>
<gene>
    <name evidence="1" type="primary">recR</name>
    <name type="ordered locus">lwe2653</name>
</gene>
<reference key="1">
    <citation type="journal article" date="2006" name="J. Bacteriol.">
        <title>Whole-genome sequence of Listeria welshimeri reveals common steps in genome reduction with Listeria innocua as compared to Listeria monocytogenes.</title>
        <authorList>
            <person name="Hain T."/>
            <person name="Steinweg C."/>
            <person name="Kuenne C.T."/>
            <person name="Billion A."/>
            <person name="Ghai R."/>
            <person name="Chatterjee S.S."/>
            <person name="Domann E."/>
            <person name="Kaerst U."/>
            <person name="Goesmann A."/>
            <person name="Bekel T."/>
            <person name="Bartels D."/>
            <person name="Kaiser O."/>
            <person name="Meyer F."/>
            <person name="Puehler A."/>
            <person name="Weisshaar B."/>
            <person name="Wehland J."/>
            <person name="Liang C."/>
            <person name="Dandekar T."/>
            <person name="Lampidis R."/>
            <person name="Kreft J."/>
            <person name="Goebel W."/>
            <person name="Chakraborty T."/>
        </authorList>
    </citation>
    <scope>NUCLEOTIDE SEQUENCE [LARGE SCALE GENOMIC DNA]</scope>
    <source>
        <strain>ATCC 35897 / DSM 20650 / CCUG 15529 / CIP 8149 / NCTC 11857 / SLCC 5334 / V8</strain>
    </source>
</reference>
<evidence type="ECO:0000255" key="1">
    <source>
        <dbReference type="HAMAP-Rule" id="MF_00017"/>
    </source>
</evidence>
<accession>A0AM39</accession>
<name>RECR_LISW6</name>
<keyword id="KW-0227">DNA damage</keyword>
<keyword id="KW-0233">DNA recombination</keyword>
<keyword id="KW-0234">DNA repair</keyword>
<keyword id="KW-0479">Metal-binding</keyword>
<keyword id="KW-0862">Zinc</keyword>
<keyword id="KW-0863">Zinc-finger</keyword>
<dbReference type="EMBL" id="AM263198">
    <property type="protein sequence ID" value="CAK22071.1"/>
    <property type="molecule type" value="Genomic_DNA"/>
</dbReference>
<dbReference type="RefSeq" id="WP_011703347.1">
    <property type="nucleotide sequence ID" value="NC_008555.1"/>
</dbReference>
<dbReference type="SMR" id="A0AM39"/>
<dbReference type="STRING" id="386043.lwe2653"/>
<dbReference type="GeneID" id="61190578"/>
<dbReference type="KEGG" id="lwe:lwe2653"/>
<dbReference type="eggNOG" id="COG0353">
    <property type="taxonomic scope" value="Bacteria"/>
</dbReference>
<dbReference type="HOGENOM" id="CLU_060739_1_0_9"/>
<dbReference type="OrthoDB" id="9802672at2"/>
<dbReference type="Proteomes" id="UP000000779">
    <property type="component" value="Chromosome"/>
</dbReference>
<dbReference type="GO" id="GO:0003677">
    <property type="term" value="F:DNA binding"/>
    <property type="evidence" value="ECO:0007669"/>
    <property type="project" value="UniProtKB-UniRule"/>
</dbReference>
<dbReference type="GO" id="GO:0008270">
    <property type="term" value="F:zinc ion binding"/>
    <property type="evidence" value="ECO:0007669"/>
    <property type="project" value="UniProtKB-KW"/>
</dbReference>
<dbReference type="GO" id="GO:0006310">
    <property type="term" value="P:DNA recombination"/>
    <property type="evidence" value="ECO:0007669"/>
    <property type="project" value="UniProtKB-UniRule"/>
</dbReference>
<dbReference type="GO" id="GO:0006281">
    <property type="term" value="P:DNA repair"/>
    <property type="evidence" value="ECO:0007669"/>
    <property type="project" value="UniProtKB-UniRule"/>
</dbReference>
<dbReference type="CDD" id="cd01025">
    <property type="entry name" value="TOPRIM_recR"/>
    <property type="match status" value="1"/>
</dbReference>
<dbReference type="Gene3D" id="3.30.60.80">
    <property type="match status" value="1"/>
</dbReference>
<dbReference type="Gene3D" id="3.40.1360.10">
    <property type="match status" value="1"/>
</dbReference>
<dbReference type="Gene3D" id="6.10.250.240">
    <property type="match status" value="1"/>
</dbReference>
<dbReference type="Gene3D" id="1.10.8.420">
    <property type="entry name" value="RecR Domain 1"/>
    <property type="match status" value="1"/>
</dbReference>
<dbReference type="HAMAP" id="MF_00017">
    <property type="entry name" value="RecR"/>
    <property type="match status" value="1"/>
</dbReference>
<dbReference type="InterPro" id="IPR000093">
    <property type="entry name" value="DNA_Rcmb_RecR"/>
</dbReference>
<dbReference type="InterPro" id="IPR023627">
    <property type="entry name" value="Rcmb_RecR"/>
</dbReference>
<dbReference type="InterPro" id="IPR015967">
    <property type="entry name" value="Rcmb_RecR_Znf"/>
</dbReference>
<dbReference type="InterPro" id="IPR006171">
    <property type="entry name" value="TOPRIM_dom"/>
</dbReference>
<dbReference type="InterPro" id="IPR034137">
    <property type="entry name" value="TOPRIM_RecR"/>
</dbReference>
<dbReference type="NCBIfam" id="TIGR00615">
    <property type="entry name" value="recR"/>
    <property type="match status" value="1"/>
</dbReference>
<dbReference type="PANTHER" id="PTHR30446">
    <property type="entry name" value="RECOMBINATION PROTEIN RECR"/>
    <property type="match status" value="1"/>
</dbReference>
<dbReference type="PANTHER" id="PTHR30446:SF0">
    <property type="entry name" value="RECOMBINATION PROTEIN RECR"/>
    <property type="match status" value="1"/>
</dbReference>
<dbReference type="Pfam" id="PF21175">
    <property type="entry name" value="RecR_C"/>
    <property type="match status" value="1"/>
</dbReference>
<dbReference type="Pfam" id="PF21176">
    <property type="entry name" value="RecR_HhH"/>
    <property type="match status" value="1"/>
</dbReference>
<dbReference type="Pfam" id="PF02132">
    <property type="entry name" value="RecR_ZnF"/>
    <property type="match status" value="1"/>
</dbReference>
<dbReference type="Pfam" id="PF13662">
    <property type="entry name" value="Toprim_4"/>
    <property type="match status" value="1"/>
</dbReference>
<dbReference type="SMART" id="SM00493">
    <property type="entry name" value="TOPRIM"/>
    <property type="match status" value="1"/>
</dbReference>
<dbReference type="SUPFAM" id="SSF111304">
    <property type="entry name" value="Recombination protein RecR"/>
    <property type="match status" value="1"/>
</dbReference>
<dbReference type="PROSITE" id="PS01300">
    <property type="entry name" value="RECR"/>
    <property type="match status" value="1"/>
</dbReference>
<dbReference type="PROSITE" id="PS50880">
    <property type="entry name" value="TOPRIM"/>
    <property type="match status" value="1"/>
</dbReference>
<organism>
    <name type="scientific">Listeria welshimeri serovar 6b (strain ATCC 35897 / DSM 20650 / CCUG 15529 / CIP 8149 / NCTC 11857 / SLCC 5334 / V8)</name>
    <dbReference type="NCBI Taxonomy" id="386043"/>
    <lineage>
        <taxon>Bacteria</taxon>
        <taxon>Bacillati</taxon>
        <taxon>Bacillota</taxon>
        <taxon>Bacilli</taxon>
        <taxon>Bacillales</taxon>
        <taxon>Listeriaceae</taxon>
        <taxon>Listeria</taxon>
    </lineage>
</organism>
<proteinExistence type="inferred from homology"/>
<sequence>MHYPEPITKLMDSFMKLPGIGPKSAARLAFYVLDMKEDDVLDFAKALVDAKRNLSFCSVCGHITDKDPCYICSDTSRDRSVICVVQESKDVIAMEKMRDFHGLYHVLHGTISPMDGIGPEDINIPDLLKRLQDDTIEEVILATNPNVEGEATAMYISRLLRPSGIKVTRIAHGLPVGGDLEYADEVTLSKAMEGRREV</sequence>
<protein>
    <recommendedName>
        <fullName evidence="1">Recombination protein RecR</fullName>
    </recommendedName>
</protein>
<comment type="function">
    <text evidence="1">May play a role in DNA repair. It seems to be involved in an RecBC-independent recombinational process of DNA repair. It may act with RecF and RecO.</text>
</comment>
<comment type="similarity">
    <text evidence="1">Belongs to the RecR family.</text>
</comment>